<dbReference type="EC" id="2.3.1.275" evidence="1"/>
<dbReference type="EMBL" id="FM177140">
    <property type="protein sequence ID" value="CAQ66712.1"/>
    <property type="molecule type" value="Genomic_DNA"/>
</dbReference>
<dbReference type="SMR" id="B3WEB1"/>
<dbReference type="KEGG" id="lcb:LCABL_16310"/>
<dbReference type="HOGENOM" id="CLU_081254_4_0_9"/>
<dbReference type="UniPathway" id="UPA00085"/>
<dbReference type="GO" id="GO:0005886">
    <property type="term" value="C:plasma membrane"/>
    <property type="evidence" value="ECO:0007669"/>
    <property type="project" value="UniProtKB-SubCell"/>
</dbReference>
<dbReference type="GO" id="GO:0043772">
    <property type="term" value="F:acyl-phosphate glycerol-3-phosphate acyltransferase activity"/>
    <property type="evidence" value="ECO:0007669"/>
    <property type="project" value="UniProtKB-UniRule"/>
</dbReference>
<dbReference type="GO" id="GO:0008654">
    <property type="term" value="P:phospholipid biosynthetic process"/>
    <property type="evidence" value="ECO:0007669"/>
    <property type="project" value="UniProtKB-UniRule"/>
</dbReference>
<dbReference type="HAMAP" id="MF_01043">
    <property type="entry name" value="PlsY"/>
    <property type="match status" value="1"/>
</dbReference>
<dbReference type="InterPro" id="IPR003811">
    <property type="entry name" value="G3P_acylTferase_PlsY"/>
</dbReference>
<dbReference type="NCBIfam" id="TIGR00023">
    <property type="entry name" value="glycerol-3-phosphate 1-O-acyltransferase PlsY"/>
    <property type="match status" value="1"/>
</dbReference>
<dbReference type="PANTHER" id="PTHR30309:SF0">
    <property type="entry name" value="GLYCEROL-3-PHOSPHATE ACYLTRANSFERASE-RELATED"/>
    <property type="match status" value="1"/>
</dbReference>
<dbReference type="PANTHER" id="PTHR30309">
    <property type="entry name" value="INNER MEMBRANE PROTEIN YGIH"/>
    <property type="match status" value="1"/>
</dbReference>
<dbReference type="Pfam" id="PF02660">
    <property type="entry name" value="G3P_acyltransf"/>
    <property type="match status" value="1"/>
</dbReference>
<dbReference type="SMART" id="SM01207">
    <property type="entry name" value="G3P_acyltransf"/>
    <property type="match status" value="1"/>
</dbReference>
<accession>B3WEB1</accession>
<proteinExistence type="inferred from homology"/>
<protein>
    <recommendedName>
        <fullName evidence="1">Glycerol-3-phosphate acyltransferase</fullName>
    </recommendedName>
    <alternativeName>
        <fullName evidence="1">Acyl-PO4 G3P acyltransferase</fullName>
    </alternativeName>
    <alternativeName>
        <fullName evidence="1">Acyl-phosphate--glycerol-3-phosphate acyltransferase</fullName>
    </alternativeName>
    <alternativeName>
        <fullName evidence="1">G3P acyltransferase</fullName>
        <shortName evidence="1">GPAT</shortName>
        <ecNumber evidence="1">2.3.1.275</ecNumber>
    </alternativeName>
    <alternativeName>
        <fullName evidence="1">Lysophosphatidic acid synthase</fullName>
        <shortName evidence="1">LPA synthase</shortName>
    </alternativeName>
</protein>
<comment type="function">
    <text evidence="1">Catalyzes the transfer of an acyl group from acyl-phosphate (acyl-PO(4)) to glycerol-3-phosphate (G3P) to form lysophosphatidic acid (LPA). This enzyme utilizes acyl-phosphate as fatty acyl donor, but not acyl-CoA or acyl-ACP.</text>
</comment>
<comment type="catalytic activity">
    <reaction evidence="1">
        <text>an acyl phosphate + sn-glycerol 3-phosphate = a 1-acyl-sn-glycero-3-phosphate + phosphate</text>
        <dbReference type="Rhea" id="RHEA:34075"/>
        <dbReference type="ChEBI" id="CHEBI:43474"/>
        <dbReference type="ChEBI" id="CHEBI:57597"/>
        <dbReference type="ChEBI" id="CHEBI:57970"/>
        <dbReference type="ChEBI" id="CHEBI:59918"/>
        <dbReference type="EC" id="2.3.1.275"/>
    </reaction>
</comment>
<comment type="pathway">
    <text evidence="1">Lipid metabolism; phospholipid metabolism.</text>
</comment>
<comment type="subunit">
    <text evidence="1">Probably interacts with PlsX.</text>
</comment>
<comment type="subcellular location">
    <subcellularLocation>
        <location evidence="1">Cell membrane</location>
        <topology evidence="1">Multi-pass membrane protein</topology>
    </subcellularLocation>
</comment>
<comment type="similarity">
    <text evidence="1">Belongs to the PlsY family.</text>
</comment>
<name>PLSY_LACCB</name>
<gene>
    <name evidence="1" type="primary">plsY</name>
    <name type="ordered locus">LCABL_16310</name>
</gene>
<organism>
    <name type="scientific">Lacticaseibacillus casei (strain BL23)</name>
    <name type="common">Lactobacillus casei</name>
    <dbReference type="NCBI Taxonomy" id="543734"/>
    <lineage>
        <taxon>Bacteria</taxon>
        <taxon>Bacillati</taxon>
        <taxon>Bacillota</taxon>
        <taxon>Bacilli</taxon>
        <taxon>Lactobacillales</taxon>
        <taxon>Lactobacillaceae</taxon>
        <taxon>Lacticaseibacillus</taxon>
    </lineage>
</organism>
<keyword id="KW-1003">Cell membrane</keyword>
<keyword id="KW-0444">Lipid biosynthesis</keyword>
<keyword id="KW-0443">Lipid metabolism</keyword>
<keyword id="KW-0472">Membrane</keyword>
<keyword id="KW-0594">Phospholipid biosynthesis</keyword>
<keyword id="KW-1208">Phospholipid metabolism</keyword>
<keyword id="KW-0808">Transferase</keyword>
<keyword id="KW-0812">Transmembrane</keyword>
<keyword id="KW-1133">Transmembrane helix</keyword>
<sequence>MILVLCFILAYFIGAIPFGVVIGKLFYHTDIRKGGSHNIGTTNAYRMLGPVGGSIVLVLDILKGTLAASLPILFGIEHHWLVLIVGLAAVFGHTFSIYIRFKGGKAVATSAGILLAYNPPFFVIAFAIWFSLILLTSMVSVASTLGMVLITAWSLVYHDWLLTTVACGLLVVFLIKHRANFKRIKAGDENMVPFGLGQYLRQHRGRS</sequence>
<feature type="chain" id="PRO_1000136097" description="Glycerol-3-phosphate acyltransferase">
    <location>
        <begin position="1"/>
        <end position="207"/>
    </location>
</feature>
<feature type="transmembrane region" description="Helical" evidence="1">
    <location>
        <begin position="2"/>
        <end position="22"/>
    </location>
</feature>
<feature type="transmembrane region" description="Helical" evidence="1">
    <location>
        <begin position="47"/>
        <end position="67"/>
    </location>
</feature>
<feature type="transmembrane region" description="Helical" evidence="1">
    <location>
        <begin position="72"/>
        <end position="92"/>
    </location>
</feature>
<feature type="transmembrane region" description="Helical" evidence="1">
    <location>
        <begin position="121"/>
        <end position="141"/>
    </location>
</feature>
<feature type="transmembrane region" description="Helical" evidence="1">
    <location>
        <begin position="155"/>
        <end position="175"/>
    </location>
</feature>
<reference key="1">
    <citation type="submission" date="2008-06" db="EMBL/GenBank/DDBJ databases">
        <title>Lactobacillus casei BL23 complete genome sequence.</title>
        <authorList>
            <person name="Maze A."/>
            <person name="Boel G."/>
            <person name="Bourand A."/>
            <person name="Loux V."/>
            <person name="Gibrat J.F."/>
            <person name="Zuniga M."/>
            <person name="Hartke A."/>
            <person name="Deutscher J."/>
        </authorList>
    </citation>
    <scope>NUCLEOTIDE SEQUENCE [LARGE SCALE GENOMIC DNA]</scope>
    <source>
        <strain>BL23</strain>
    </source>
</reference>
<evidence type="ECO:0000255" key="1">
    <source>
        <dbReference type="HAMAP-Rule" id="MF_01043"/>
    </source>
</evidence>